<dbReference type="EMBL" id="AF060078">
    <property type="protein sequence ID" value="AAC14873.1"/>
    <property type="molecule type" value="Genomic_DNA"/>
</dbReference>
<dbReference type="EMBL" id="AE006470">
    <property type="protein sequence ID" value="AAM72279.1"/>
    <property type="molecule type" value="Genomic_DNA"/>
</dbReference>
<dbReference type="RefSeq" id="NP_661937.1">
    <property type="nucleotide sequence ID" value="NC_002932.3"/>
</dbReference>
<dbReference type="RefSeq" id="WP_010932724.1">
    <property type="nucleotide sequence ID" value="NC_002932.3"/>
</dbReference>
<dbReference type="SMR" id="O68986"/>
<dbReference type="STRING" id="194439.CT1046"/>
<dbReference type="EnsemblBacteria" id="AAM72279">
    <property type="protein sequence ID" value="AAM72279"/>
    <property type="gene ID" value="CT1046"/>
</dbReference>
<dbReference type="KEGG" id="cte:CT1046"/>
<dbReference type="eggNOG" id="ENOG5033HMR">
    <property type="taxonomic scope" value="Bacteria"/>
</dbReference>
<dbReference type="HOGENOM" id="CLU_198118_0_0_10"/>
<dbReference type="OrthoDB" id="595425at2"/>
<dbReference type="Proteomes" id="UP000001007">
    <property type="component" value="Chromosome"/>
</dbReference>
<dbReference type="GO" id="GO:0033105">
    <property type="term" value="C:chlorosome envelope"/>
    <property type="evidence" value="ECO:0007669"/>
    <property type="project" value="UniProtKB-SubCell"/>
</dbReference>
<dbReference type="GO" id="GO:0042314">
    <property type="term" value="F:bacteriochlorophyll binding"/>
    <property type="evidence" value="ECO:0007669"/>
    <property type="project" value="UniProtKB-KW"/>
</dbReference>
<dbReference type="GO" id="GO:0015979">
    <property type="term" value="P:photosynthesis"/>
    <property type="evidence" value="ECO:0007669"/>
    <property type="project" value="UniProtKB-KW"/>
</dbReference>
<protein>
    <recommendedName>
        <fullName>Chlorosome envelope protein F</fullName>
    </recommendedName>
</protein>
<proteinExistence type="inferred from homology"/>
<comment type="subcellular location">
    <subcellularLocation>
        <location>Chlorosome</location>
        <location>Chlorosome envelope</location>
    </subcellularLocation>
</comment>
<comment type="similarity">
    <text evidence="1">Belongs to the CsmB/CsmF family.</text>
</comment>
<organism>
    <name type="scientific">Chlorobaculum tepidum (strain ATCC 49652 / DSM 12025 / NBRC 103806 / TLS)</name>
    <name type="common">Chlorobium tepidum</name>
    <dbReference type="NCBI Taxonomy" id="194439"/>
    <lineage>
        <taxon>Bacteria</taxon>
        <taxon>Pseudomonadati</taxon>
        <taxon>Chlorobiota</taxon>
        <taxon>Chlorobiia</taxon>
        <taxon>Chlorobiales</taxon>
        <taxon>Chlorobiaceae</taxon>
        <taxon>Chlorobaculum</taxon>
    </lineage>
</organism>
<gene>
    <name type="primary">csmF</name>
    <name type="ordered locus">CT1046</name>
</gene>
<keyword id="KW-0076">Bacteriochlorophyll</keyword>
<keyword id="KW-0148">Chlorophyll</keyword>
<keyword id="KW-0151">Chlorosome</keyword>
<keyword id="KW-0157">Chromophore</keyword>
<keyword id="KW-0602">Photosynthesis</keyword>
<keyword id="KW-1185">Reference proteome</keyword>
<sequence length="77" mass="7743">MANESGNIGVFGDLFTAVGDLAQQAVDMAGSALKTATDTVQPVTNACVQLCTTSINSATQLVEGATKAITTAIAPKQ</sequence>
<accession>O68986</accession>
<reference key="1">
    <citation type="journal article" date="2002" name="Biochemistry">
        <title>Subcellular localization of chlorosome proteins in Chlorobium tepidum and characterization of three new chlorosome proteins: CsmF, CsmH, and CsmX.</title>
        <authorList>
            <person name="Vassilieva E.V."/>
            <person name="Stirewalt V.L."/>
            <person name="Jakobs C.U."/>
            <person name="Frigaard N.-U."/>
            <person name="Inoue-Sakamoto K."/>
            <person name="Baker M.A."/>
            <person name="Sotak A."/>
            <person name="Bryant D.A."/>
        </authorList>
    </citation>
    <scope>NUCLEOTIDE SEQUENCE [GENOMIC DNA]</scope>
    <source>
        <strain>ATCC 49652 / DSM 12025 / NBRC 103806 / TLS</strain>
    </source>
</reference>
<reference key="2">
    <citation type="journal article" date="2002" name="Proc. Natl. Acad. Sci. U.S.A.">
        <title>The complete genome sequence of Chlorobium tepidum TLS, a photosynthetic, anaerobic, green-sulfur bacterium.</title>
        <authorList>
            <person name="Eisen J.A."/>
            <person name="Nelson K.E."/>
            <person name="Paulsen I.T."/>
            <person name="Heidelberg J.F."/>
            <person name="Wu M."/>
            <person name="Dodson R.J."/>
            <person name="DeBoy R.T."/>
            <person name="Gwinn M.L."/>
            <person name="Nelson W.C."/>
            <person name="Haft D.H."/>
            <person name="Hickey E.K."/>
            <person name="Peterson J.D."/>
            <person name="Durkin A.S."/>
            <person name="Kolonay J.F."/>
            <person name="Yang F."/>
            <person name="Holt I.E."/>
            <person name="Umayam L.A."/>
            <person name="Mason T.M."/>
            <person name="Brenner M."/>
            <person name="Shea T.P."/>
            <person name="Parksey D.S."/>
            <person name="Nierman W.C."/>
            <person name="Feldblyum T.V."/>
            <person name="Hansen C.L."/>
            <person name="Craven M.B."/>
            <person name="Radune D."/>
            <person name="Vamathevan J.J."/>
            <person name="Khouri H.M."/>
            <person name="White O."/>
            <person name="Gruber T.M."/>
            <person name="Ketchum K.A."/>
            <person name="Venter J.C."/>
            <person name="Tettelin H."/>
            <person name="Bryant D.A."/>
            <person name="Fraser C.M."/>
        </authorList>
    </citation>
    <scope>NUCLEOTIDE SEQUENCE [LARGE SCALE GENOMIC DNA]</scope>
    <source>
        <strain>ATCC 49652 / DSM 12025 / NBRC 103806 / TLS</strain>
    </source>
</reference>
<feature type="chain" id="PRO_0000192641" description="Chlorosome envelope protein F">
    <location>
        <begin position="1"/>
        <end position="77"/>
    </location>
</feature>
<name>CSMF_CHLTE</name>
<evidence type="ECO:0000305" key="1"/>